<accession>Q9LDZ5</accession>
<accession>Q67YK2</accession>
<sequence>MTCCFSCLNPRTKDIRVDIDNARCNSRYQTDSSVHGSDTTGTESISGILVNGKVNSPIPGGGARSFTFKELAAATRNFREVNLLGEGGFGRVYKGRLDSGQVVAIKQLNPDGLQGNREFIVEVLMLSLLHHPNLVTLIGYCTSGDQRLLVYEYMPMGSLEDHLFDLESNQEPLSWNTRMKIAVGAARGIEYLHCTANPPVIYRDLKSANILLDKEFSPKLSDFGLAKLGPVGDRTHVSTRVMGTYGYCAPEYAMSGKLTVKSDIYCFGVVLLELITGRKAIDLGQKQGEQNLVTWSRPYLKDQKKFGHLVDPSLRGKYPRRCLNYAIAIIAMCLNEEAHYRPFIGDIVVALEYLAAQSRSHEARNVSSPSPEISRTPRRDL</sequence>
<dbReference type="EC" id="2.7.11.1" evidence="6"/>
<dbReference type="EMBL" id="AC027665">
    <property type="protein sequence ID" value="AAF79602.1"/>
    <property type="molecule type" value="Genomic_DNA"/>
</dbReference>
<dbReference type="EMBL" id="AC069251">
    <property type="protein sequence ID" value="AAF80637.1"/>
    <property type="molecule type" value="Genomic_DNA"/>
</dbReference>
<dbReference type="EMBL" id="CP002684">
    <property type="protein sequence ID" value="AEE30001.1"/>
    <property type="molecule type" value="Genomic_DNA"/>
</dbReference>
<dbReference type="EMBL" id="AK176466">
    <property type="protein sequence ID" value="BAD44229.1"/>
    <property type="molecule type" value="mRNA"/>
</dbReference>
<dbReference type="EMBL" id="AK176526">
    <property type="protein sequence ID" value="BAD44289.1"/>
    <property type="molecule type" value="mRNA"/>
</dbReference>
<dbReference type="RefSeq" id="NP_173489.2">
    <property type="nucleotide sequence ID" value="NM_101916.4"/>
</dbReference>
<dbReference type="SMR" id="Q9LDZ5"/>
<dbReference type="FunCoup" id="Q9LDZ5">
    <property type="interactions" value="767"/>
</dbReference>
<dbReference type="STRING" id="3702.Q9LDZ5"/>
<dbReference type="iPTMnet" id="Q9LDZ5"/>
<dbReference type="PaxDb" id="3702-AT1G20650.1"/>
<dbReference type="ProteomicsDB" id="236356"/>
<dbReference type="EnsemblPlants" id="AT1G20650.1">
    <property type="protein sequence ID" value="AT1G20650.1"/>
    <property type="gene ID" value="AT1G20650"/>
</dbReference>
<dbReference type="GeneID" id="838654"/>
<dbReference type="Gramene" id="AT1G20650.1">
    <property type="protein sequence ID" value="AT1G20650.1"/>
    <property type="gene ID" value="AT1G20650"/>
</dbReference>
<dbReference type="KEGG" id="ath:AT1G20650"/>
<dbReference type="Araport" id="AT1G20650"/>
<dbReference type="TAIR" id="AT1G20650">
    <property type="gene designation" value="ASG5"/>
</dbReference>
<dbReference type="eggNOG" id="KOG1187">
    <property type="taxonomic scope" value="Eukaryota"/>
</dbReference>
<dbReference type="HOGENOM" id="CLU_000288_21_4_1"/>
<dbReference type="InParanoid" id="Q9LDZ5"/>
<dbReference type="OMA" id="DIDNARC"/>
<dbReference type="OrthoDB" id="4062651at2759"/>
<dbReference type="PhylomeDB" id="Q9LDZ5"/>
<dbReference type="PRO" id="PR:Q9LDZ5"/>
<dbReference type="Proteomes" id="UP000006548">
    <property type="component" value="Chromosome 1"/>
</dbReference>
<dbReference type="ExpressionAtlas" id="Q9LDZ5">
    <property type="expression patterns" value="baseline and differential"/>
</dbReference>
<dbReference type="GO" id="GO:0005886">
    <property type="term" value="C:plasma membrane"/>
    <property type="evidence" value="ECO:0007669"/>
    <property type="project" value="UniProtKB-SubCell"/>
</dbReference>
<dbReference type="GO" id="GO:0005524">
    <property type="term" value="F:ATP binding"/>
    <property type="evidence" value="ECO:0007669"/>
    <property type="project" value="UniProtKB-KW"/>
</dbReference>
<dbReference type="GO" id="GO:0106310">
    <property type="term" value="F:protein serine kinase activity"/>
    <property type="evidence" value="ECO:0007669"/>
    <property type="project" value="RHEA"/>
</dbReference>
<dbReference type="GO" id="GO:0004674">
    <property type="term" value="F:protein serine/threonine kinase activity"/>
    <property type="evidence" value="ECO:0007669"/>
    <property type="project" value="UniProtKB-KW"/>
</dbReference>
<dbReference type="GO" id="GO:0006952">
    <property type="term" value="P:defense response"/>
    <property type="evidence" value="ECO:0007669"/>
    <property type="project" value="UniProtKB-KW"/>
</dbReference>
<dbReference type="CDD" id="cd14066">
    <property type="entry name" value="STKc_IRAK"/>
    <property type="match status" value="1"/>
</dbReference>
<dbReference type="FunFam" id="3.30.200.20:FF:000266">
    <property type="entry name" value="probable serine/threonine-protein kinase RLCKVII"/>
    <property type="match status" value="1"/>
</dbReference>
<dbReference type="FunFam" id="1.10.510.10:FF:000032">
    <property type="entry name" value="Serine/threonine-protein kinase PBS1"/>
    <property type="match status" value="1"/>
</dbReference>
<dbReference type="Gene3D" id="3.30.200.20">
    <property type="entry name" value="Phosphorylase Kinase, domain 1"/>
    <property type="match status" value="1"/>
</dbReference>
<dbReference type="Gene3D" id="1.10.510.10">
    <property type="entry name" value="Transferase(Phosphotransferase) domain 1"/>
    <property type="match status" value="1"/>
</dbReference>
<dbReference type="InterPro" id="IPR011009">
    <property type="entry name" value="Kinase-like_dom_sf"/>
</dbReference>
<dbReference type="InterPro" id="IPR000719">
    <property type="entry name" value="Prot_kinase_dom"/>
</dbReference>
<dbReference type="InterPro" id="IPR017441">
    <property type="entry name" value="Protein_kinase_ATP_BS"/>
</dbReference>
<dbReference type="InterPro" id="IPR001245">
    <property type="entry name" value="Ser-Thr/Tyr_kinase_cat_dom"/>
</dbReference>
<dbReference type="InterPro" id="IPR008271">
    <property type="entry name" value="Ser/Thr_kinase_AS"/>
</dbReference>
<dbReference type="PANTHER" id="PTHR47985">
    <property type="entry name" value="OS07G0668900 PROTEIN"/>
    <property type="match status" value="1"/>
</dbReference>
<dbReference type="PANTHER" id="PTHR47985:SF3">
    <property type="entry name" value="SERINE_THREONINE-PROTEIN KINASE PBL21-RELATED"/>
    <property type="match status" value="1"/>
</dbReference>
<dbReference type="Pfam" id="PF07714">
    <property type="entry name" value="PK_Tyr_Ser-Thr"/>
    <property type="match status" value="1"/>
</dbReference>
<dbReference type="SMART" id="SM00220">
    <property type="entry name" value="S_TKc"/>
    <property type="match status" value="1"/>
</dbReference>
<dbReference type="SUPFAM" id="SSF56112">
    <property type="entry name" value="Protein kinase-like (PK-like)"/>
    <property type="match status" value="1"/>
</dbReference>
<dbReference type="PROSITE" id="PS00107">
    <property type="entry name" value="PROTEIN_KINASE_ATP"/>
    <property type="match status" value="1"/>
</dbReference>
<dbReference type="PROSITE" id="PS50011">
    <property type="entry name" value="PROTEIN_KINASE_DOM"/>
    <property type="match status" value="1"/>
</dbReference>
<dbReference type="PROSITE" id="PS00108">
    <property type="entry name" value="PROTEIN_KINASE_ST"/>
    <property type="match status" value="1"/>
</dbReference>
<evidence type="ECO:0000250" key="1">
    <source>
        <dbReference type="UniProtKB" id="O48814"/>
    </source>
</evidence>
<evidence type="ECO:0000250" key="2">
    <source>
        <dbReference type="UniProtKB" id="Q9FE20"/>
    </source>
</evidence>
<evidence type="ECO:0000255" key="3">
    <source>
        <dbReference type="PROSITE-ProRule" id="PRU00159"/>
    </source>
</evidence>
<evidence type="ECO:0000256" key="4">
    <source>
        <dbReference type="SAM" id="MobiDB-lite"/>
    </source>
</evidence>
<evidence type="ECO:0000303" key="5">
    <source>
    </source>
</evidence>
<evidence type="ECO:0000305" key="6"/>
<evidence type="ECO:0000312" key="7">
    <source>
        <dbReference type="Araport" id="AT1G20650"/>
    </source>
</evidence>
<evidence type="ECO:0000312" key="8">
    <source>
        <dbReference type="EMBL" id="AAF79602.1"/>
    </source>
</evidence>
<evidence type="ECO:0000312" key="9">
    <source>
        <dbReference type="EMBL" id="AAF80637.1"/>
    </source>
</evidence>
<reference key="1">
    <citation type="journal article" date="2000" name="Nature">
        <title>Sequence and analysis of chromosome 1 of the plant Arabidopsis thaliana.</title>
        <authorList>
            <person name="Theologis A."/>
            <person name="Ecker J.R."/>
            <person name="Palm C.J."/>
            <person name="Federspiel N.A."/>
            <person name="Kaul S."/>
            <person name="White O."/>
            <person name="Alonso J."/>
            <person name="Altafi H."/>
            <person name="Araujo R."/>
            <person name="Bowman C.L."/>
            <person name="Brooks S.Y."/>
            <person name="Buehler E."/>
            <person name="Chan A."/>
            <person name="Chao Q."/>
            <person name="Chen H."/>
            <person name="Cheuk R.F."/>
            <person name="Chin C.W."/>
            <person name="Chung M.K."/>
            <person name="Conn L."/>
            <person name="Conway A.B."/>
            <person name="Conway A.R."/>
            <person name="Creasy T.H."/>
            <person name="Dewar K."/>
            <person name="Dunn P."/>
            <person name="Etgu P."/>
            <person name="Feldblyum T.V."/>
            <person name="Feng J.-D."/>
            <person name="Fong B."/>
            <person name="Fujii C.Y."/>
            <person name="Gill J.E."/>
            <person name="Goldsmith A.D."/>
            <person name="Haas B."/>
            <person name="Hansen N.F."/>
            <person name="Hughes B."/>
            <person name="Huizar L."/>
            <person name="Hunter J.L."/>
            <person name="Jenkins J."/>
            <person name="Johnson-Hopson C."/>
            <person name="Khan S."/>
            <person name="Khaykin E."/>
            <person name="Kim C.J."/>
            <person name="Koo H.L."/>
            <person name="Kremenetskaia I."/>
            <person name="Kurtz D.B."/>
            <person name="Kwan A."/>
            <person name="Lam B."/>
            <person name="Langin-Hooper S."/>
            <person name="Lee A."/>
            <person name="Lee J.M."/>
            <person name="Lenz C.A."/>
            <person name="Li J.H."/>
            <person name="Li Y.-P."/>
            <person name="Lin X."/>
            <person name="Liu S.X."/>
            <person name="Liu Z.A."/>
            <person name="Luros J.S."/>
            <person name="Maiti R."/>
            <person name="Marziali A."/>
            <person name="Militscher J."/>
            <person name="Miranda M."/>
            <person name="Nguyen M."/>
            <person name="Nierman W.C."/>
            <person name="Osborne B.I."/>
            <person name="Pai G."/>
            <person name="Peterson J."/>
            <person name="Pham P.K."/>
            <person name="Rizzo M."/>
            <person name="Rooney T."/>
            <person name="Rowley D."/>
            <person name="Sakano H."/>
            <person name="Salzberg S.L."/>
            <person name="Schwartz J.R."/>
            <person name="Shinn P."/>
            <person name="Southwick A.M."/>
            <person name="Sun H."/>
            <person name="Tallon L.J."/>
            <person name="Tambunga G."/>
            <person name="Toriumi M.J."/>
            <person name="Town C.D."/>
            <person name="Utterback T."/>
            <person name="Van Aken S."/>
            <person name="Vaysberg M."/>
            <person name="Vysotskaia V.S."/>
            <person name="Walker M."/>
            <person name="Wu D."/>
            <person name="Yu G."/>
            <person name="Fraser C.M."/>
            <person name="Venter J.C."/>
            <person name="Davis R.W."/>
        </authorList>
    </citation>
    <scope>NUCLEOTIDE SEQUENCE [LARGE SCALE GENOMIC DNA]</scope>
    <source>
        <strain>cv. Columbia</strain>
    </source>
</reference>
<reference key="2">
    <citation type="journal article" date="2017" name="Plant J.">
        <title>Araport11: a complete reannotation of the Arabidopsis thaliana reference genome.</title>
        <authorList>
            <person name="Cheng C.Y."/>
            <person name="Krishnakumar V."/>
            <person name="Chan A.P."/>
            <person name="Thibaud-Nissen F."/>
            <person name="Schobel S."/>
            <person name="Town C.D."/>
        </authorList>
    </citation>
    <scope>GENOME REANNOTATION</scope>
    <source>
        <strain>cv. Columbia</strain>
    </source>
</reference>
<reference key="3">
    <citation type="submission" date="2004-09" db="EMBL/GenBank/DDBJ databases">
        <title>Large-scale analysis of RIKEN Arabidopsis full-length (RAFL) cDNAs.</title>
        <authorList>
            <person name="Totoki Y."/>
            <person name="Seki M."/>
            <person name="Ishida J."/>
            <person name="Nakajima M."/>
            <person name="Enju A."/>
            <person name="Kamiya A."/>
            <person name="Narusaka M."/>
            <person name="Shin-i T."/>
            <person name="Nakagawa M."/>
            <person name="Sakamoto N."/>
            <person name="Oishi K."/>
            <person name="Kohara Y."/>
            <person name="Kobayashi M."/>
            <person name="Toyoda A."/>
            <person name="Sakaki Y."/>
            <person name="Sakurai T."/>
            <person name="Iida K."/>
            <person name="Akiyama K."/>
            <person name="Satou M."/>
            <person name="Toyoda T."/>
            <person name="Konagaya A."/>
            <person name="Carninci P."/>
            <person name="Kawai J."/>
            <person name="Hayashizaki Y."/>
            <person name="Shinozaki K."/>
        </authorList>
    </citation>
    <scope>NUCLEOTIDE SEQUENCE [LARGE SCALE MRNA]</scope>
    <source>
        <strain>cv. Columbia</strain>
    </source>
</reference>
<reference key="4">
    <citation type="journal article" date="2009" name="Plant Physiol.">
        <title>Large-scale Arabidopsis phosphoproteome profiling reveals novel chloroplast kinase substrates and phosphorylation networks.</title>
        <authorList>
            <person name="Reiland S."/>
            <person name="Messerli G."/>
            <person name="Baerenfaller K."/>
            <person name="Gerrits B."/>
            <person name="Endler A."/>
            <person name="Grossmann J."/>
            <person name="Gruissem W."/>
            <person name="Baginsky S."/>
        </authorList>
    </citation>
    <scope>IDENTIFICATION BY MASS SPECTROMETRY [LARGE SCALE ANALYSIS]</scope>
</reference>
<reference key="5">
    <citation type="journal article" date="2010" name="Cell Host Microbe">
        <title>Receptor-like cytoplasmic kinases integrate signaling from multiple plant immune receptors and are targeted by a Pseudomonas syringae effector.</title>
        <authorList>
            <person name="Zhang J."/>
            <person name="Li W."/>
            <person name="Xiang T."/>
            <person name="Liu Z."/>
            <person name="Laluk K."/>
            <person name="Ding X."/>
            <person name="Zou Y."/>
            <person name="Gao M."/>
            <person name="Zhang X."/>
            <person name="Chen S."/>
            <person name="Mengiste T."/>
            <person name="Zhang Y."/>
            <person name="Zhou J.M."/>
        </authorList>
    </citation>
    <scope>GENE FAMILY</scope>
    <scope>NOMENCLATURE</scope>
</reference>
<comment type="function">
    <text evidence="1">May be involved in plant defense signaling.</text>
</comment>
<comment type="catalytic activity">
    <reaction evidence="6">
        <text>L-seryl-[protein] + ATP = O-phospho-L-seryl-[protein] + ADP + H(+)</text>
        <dbReference type="Rhea" id="RHEA:17989"/>
        <dbReference type="Rhea" id="RHEA-COMP:9863"/>
        <dbReference type="Rhea" id="RHEA-COMP:11604"/>
        <dbReference type="ChEBI" id="CHEBI:15378"/>
        <dbReference type="ChEBI" id="CHEBI:29999"/>
        <dbReference type="ChEBI" id="CHEBI:30616"/>
        <dbReference type="ChEBI" id="CHEBI:83421"/>
        <dbReference type="ChEBI" id="CHEBI:456216"/>
        <dbReference type="EC" id="2.7.11.1"/>
    </reaction>
</comment>
<comment type="catalytic activity">
    <reaction evidence="6">
        <text>L-threonyl-[protein] + ATP = O-phospho-L-threonyl-[protein] + ADP + H(+)</text>
        <dbReference type="Rhea" id="RHEA:46608"/>
        <dbReference type="Rhea" id="RHEA-COMP:11060"/>
        <dbReference type="Rhea" id="RHEA-COMP:11605"/>
        <dbReference type="ChEBI" id="CHEBI:15378"/>
        <dbReference type="ChEBI" id="CHEBI:30013"/>
        <dbReference type="ChEBI" id="CHEBI:30616"/>
        <dbReference type="ChEBI" id="CHEBI:61977"/>
        <dbReference type="ChEBI" id="CHEBI:456216"/>
        <dbReference type="EC" id="2.7.11.1"/>
    </reaction>
</comment>
<comment type="subcellular location">
    <subcellularLocation>
        <location evidence="1">Cell membrane</location>
        <topology evidence="1">Lipid-anchor</topology>
    </subcellularLocation>
</comment>
<comment type="PTM">
    <text evidence="2">Palmitoylation at Cys-3 and Cys-7 are required for plasma membrane location.</text>
</comment>
<comment type="similarity">
    <text evidence="3">Belongs to the protein kinase superfamily. Ser/Thr protein kinase family.</text>
</comment>
<protein>
    <recommendedName>
        <fullName evidence="6">Probable serine/threonine-protein kinase PBL21</fullName>
        <ecNumber evidence="6">2.7.11.1</ecNumber>
    </recommendedName>
    <alternativeName>
        <fullName evidence="5">PBS1-like protein 21</fullName>
    </alternativeName>
    <alternativeName>
        <fullName evidence="6">Protein ALTERED SEED GERMINATION 5</fullName>
    </alternativeName>
</protein>
<gene>
    <name evidence="5" type="primary">PBL21</name>
    <name evidence="6" type="synonym">ASG5</name>
    <name evidence="7" type="ordered locus">At1g20650</name>
    <name evidence="9" type="ORF">F2D10.13</name>
    <name evidence="8" type="ORF">F5M15.3</name>
</gene>
<keyword id="KW-0067">ATP-binding</keyword>
<keyword id="KW-1003">Cell membrane</keyword>
<keyword id="KW-0418">Kinase</keyword>
<keyword id="KW-0449">Lipoprotein</keyword>
<keyword id="KW-0472">Membrane</keyword>
<keyword id="KW-0547">Nucleotide-binding</keyword>
<keyword id="KW-0564">Palmitate</keyword>
<keyword id="KW-0611">Plant defense</keyword>
<keyword id="KW-1185">Reference proteome</keyword>
<keyword id="KW-0723">Serine/threonine-protein kinase</keyword>
<keyword id="KW-0808">Transferase</keyword>
<name>PBL21_ARATH</name>
<proteinExistence type="evidence at protein level"/>
<feature type="chain" id="PRO_0000438613" description="Probable serine/threonine-protein kinase PBL21">
    <location>
        <begin position="1"/>
        <end position="381"/>
    </location>
</feature>
<feature type="domain" description="Protein kinase" evidence="3">
    <location>
        <begin position="78"/>
        <end position="354"/>
    </location>
</feature>
<feature type="region of interest" description="Disordered" evidence="4">
    <location>
        <begin position="362"/>
        <end position="381"/>
    </location>
</feature>
<feature type="active site" description="Proton acceptor" evidence="3">
    <location>
        <position position="204"/>
    </location>
</feature>
<feature type="binding site" evidence="3">
    <location>
        <begin position="84"/>
        <end position="92"/>
    </location>
    <ligand>
        <name>ATP</name>
        <dbReference type="ChEBI" id="CHEBI:30616"/>
    </ligand>
</feature>
<feature type="binding site" evidence="3">
    <location>
        <position position="106"/>
    </location>
    <ligand>
        <name>ATP</name>
        <dbReference type="ChEBI" id="CHEBI:30616"/>
    </ligand>
</feature>
<feature type="lipid moiety-binding region" description="S-palmitoyl cysteine" evidence="2">
    <location>
        <position position="3"/>
    </location>
</feature>
<feature type="sequence conflict" description="In Ref. 3; BAD44229." evidence="6" ref="3">
    <original>G</original>
    <variation>S</variation>
    <location>
        <position position="60"/>
    </location>
</feature>
<organism>
    <name type="scientific">Arabidopsis thaliana</name>
    <name type="common">Mouse-ear cress</name>
    <dbReference type="NCBI Taxonomy" id="3702"/>
    <lineage>
        <taxon>Eukaryota</taxon>
        <taxon>Viridiplantae</taxon>
        <taxon>Streptophyta</taxon>
        <taxon>Embryophyta</taxon>
        <taxon>Tracheophyta</taxon>
        <taxon>Spermatophyta</taxon>
        <taxon>Magnoliopsida</taxon>
        <taxon>eudicotyledons</taxon>
        <taxon>Gunneridae</taxon>
        <taxon>Pentapetalae</taxon>
        <taxon>rosids</taxon>
        <taxon>malvids</taxon>
        <taxon>Brassicales</taxon>
        <taxon>Brassicaceae</taxon>
        <taxon>Camelineae</taxon>
        <taxon>Arabidopsis</taxon>
    </lineage>
</organism>